<accession>P68242</accession>
<accession>P37035</accession>
<proteinExistence type="evidence at transcript level"/>
<dbReference type="EMBL" id="S70833">
    <property type="protein sequence ID" value="AAB30866.1"/>
    <property type="molecule type" value="mRNA"/>
</dbReference>
<dbReference type="RefSeq" id="XP_015714368.1">
    <property type="nucleotide sequence ID" value="XM_015858882.2"/>
</dbReference>
<dbReference type="SMR" id="P68242"/>
<dbReference type="GlyCosmos" id="P68242">
    <property type="glycosylation" value="2 sites, No reported glycans"/>
</dbReference>
<dbReference type="Ensembl" id="ENSCJPT00005007202.1">
    <property type="protein sequence ID" value="ENSCJPP00005004271.1"/>
    <property type="gene ID" value="ENSCJPG00005004279.1"/>
</dbReference>
<dbReference type="Ensembl" id="ENSCJPT00005007204.1">
    <property type="protein sequence ID" value="ENSCJPP00005004273.1"/>
    <property type="gene ID" value="ENSCJPG00005004279.1"/>
</dbReference>
<dbReference type="Ensembl" id="ENSCJPT00005007205.1">
    <property type="protein sequence ID" value="ENSCJPP00005004274.1"/>
    <property type="gene ID" value="ENSCJPG00005004279.1"/>
</dbReference>
<dbReference type="GeneID" id="107311949"/>
<dbReference type="KEGG" id="cjo:107311949"/>
<dbReference type="CTD" id="1081"/>
<dbReference type="GeneTree" id="ENSGT00390000012242"/>
<dbReference type="OrthoDB" id="9852859at2759"/>
<dbReference type="Proteomes" id="UP000694412">
    <property type="component" value="Chromosome 3"/>
</dbReference>
<dbReference type="GO" id="GO:0005615">
    <property type="term" value="C:extracellular space"/>
    <property type="evidence" value="ECO:0000250"/>
    <property type="project" value="UniProtKB"/>
</dbReference>
<dbReference type="GO" id="GO:0016914">
    <property type="term" value="C:follicle-stimulating hormone complex"/>
    <property type="evidence" value="ECO:0000250"/>
    <property type="project" value="UniProtKB"/>
</dbReference>
<dbReference type="GO" id="GO:0016913">
    <property type="term" value="F:follicle-stimulating hormone activity"/>
    <property type="evidence" value="ECO:0000250"/>
    <property type="project" value="UniProtKB"/>
</dbReference>
<dbReference type="GO" id="GO:0007186">
    <property type="term" value="P:G protein-coupled receptor signaling pathway"/>
    <property type="evidence" value="ECO:0000250"/>
    <property type="project" value="UniProtKB"/>
</dbReference>
<dbReference type="GO" id="GO:0010893">
    <property type="term" value="P:positive regulation of steroid biosynthetic process"/>
    <property type="evidence" value="ECO:0000250"/>
    <property type="project" value="UniProtKB"/>
</dbReference>
<dbReference type="GO" id="GO:0010469">
    <property type="term" value="P:regulation of signaling receptor activity"/>
    <property type="evidence" value="ECO:0000250"/>
    <property type="project" value="UniProtKB"/>
</dbReference>
<dbReference type="GO" id="GO:0006590">
    <property type="term" value="P:thyroid hormone generation"/>
    <property type="evidence" value="ECO:0007669"/>
    <property type="project" value="TreeGrafter"/>
</dbReference>
<dbReference type="FunFam" id="2.10.90.10:FF:000011">
    <property type="entry name" value="Glycoprotein hormones alpha chain"/>
    <property type="match status" value="1"/>
</dbReference>
<dbReference type="Gene3D" id="2.10.90.10">
    <property type="entry name" value="Cystine-knot cytokines"/>
    <property type="match status" value="1"/>
</dbReference>
<dbReference type="InterPro" id="IPR029034">
    <property type="entry name" value="Cystine-knot_cytokine"/>
</dbReference>
<dbReference type="InterPro" id="IPR000476">
    <property type="entry name" value="Glyco_hormone"/>
</dbReference>
<dbReference type="PANTHER" id="PTHR11509">
    <property type="entry name" value="GLYCOPROTEIN HORMONE ALPHA CHAIN"/>
    <property type="match status" value="1"/>
</dbReference>
<dbReference type="PANTHER" id="PTHR11509:SF0">
    <property type="entry name" value="GLYCOPROTEIN HORMONES ALPHA CHAIN"/>
    <property type="match status" value="1"/>
</dbReference>
<dbReference type="Pfam" id="PF00236">
    <property type="entry name" value="Hormone_6"/>
    <property type="match status" value="1"/>
</dbReference>
<dbReference type="PRINTS" id="PR00274">
    <property type="entry name" value="GLYCOHORMONE"/>
</dbReference>
<dbReference type="SMART" id="SM00067">
    <property type="entry name" value="GHA"/>
    <property type="match status" value="1"/>
</dbReference>
<dbReference type="SUPFAM" id="SSF57501">
    <property type="entry name" value="Cystine-knot cytokines"/>
    <property type="match status" value="1"/>
</dbReference>
<dbReference type="PROSITE" id="PS00779">
    <property type="entry name" value="GLYCO_HORMONE_ALPHA_1"/>
    <property type="match status" value="1"/>
</dbReference>
<dbReference type="PROSITE" id="PS00780">
    <property type="entry name" value="GLYCO_HORMONE_ALPHA_2"/>
    <property type="match status" value="1"/>
</dbReference>
<dbReference type="PROSITE" id="PS50277">
    <property type="entry name" value="GLYCO_HORMONE_ALPHA_3"/>
    <property type="match status" value="1"/>
</dbReference>
<evidence type="ECO:0000250" key="1">
    <source>
        <dbReference type="UniProtKB" id="P01215"/>
    </source>
</evidence>
<evidence type="ECO:0000255" key="2"/>
<evidence type="ECO:0000305" key="3"/>
<feature type="signal peptide" evidence="2">
    <location>
        <begin position="1"/>
        <end position="24"/>
    </location>
</feature>
<feature type="chain" id="PRO_0000011657" description="Glycoprotein hormones alpha chain">
    <location>
        <begin position="25"/>
        <end position="120"/>
    </location>
</feature>
<feature type="glycosylation site" description="N-linked (GlcNAc...) asparagine" evidence="1">
    <location>
        <position position="80"/>
    </location>
</feature>
<feature type="glycosylation site" description="N-linked (GlcNAc...) asparagine" evidence="1">
    <location>
        <position position="106"/>
    </location>
</feature>
<feature type="disulfide bond" evidence="1">
    <location>
        <begin position="35"/>
        <end position="59"/>
    </location>
</feature>
<feature type="disulfide bond" evidence="1">
    <location>
        <begin position="38"/>
        <end position="88"/>
    </location>
</feature>
<feature type="disulfide bond" evidence="1">
    <location>
        <begin position="56"/>
        <end position="110"/>
    </location>
</feature>
<feature type="disulfide bond" evidence="1">
    <location>
        <begin position="60"/>
        <end position="112"/>
    </location>
</feature>
<feature type="disulfide bond" evidence="1">
    <location>
        <begin position="87"/>
        <end position="115"/>
    </location>
</feature>
<name>GLHA_COTJA</name>
<reference key="1">
    <citation type="journal article" date="1994" name="Gen. Comp. Endocrinol.">
        <title>Molecular cloning of complementary deoxyribonucleic acids for the pituitary glycoprotein hormone alpha-subunit and luteinizing hormone beta-subunit precursor molecules of Japanese quail (Coturnix coturnix japonica).</title>
        <authorList>
            <person name="Ando H."/>
            <person name="Ishii S."/>
        </authorList>
    </citation>
    <scope>NUCLEOTIDE SEQUENCE [MRNA]</scope>
    <source>
        <tissue>Pituitary</tissue>
    </source>
</reference>
<comment type="function">
    <text evidence="1">Shared alpha chain of heterodimeric glycoprotein hormones. These hormones bind specific receptors on target cells that in turn activate downstream signaling pathways.</text>
</comment>
<comment type="subunit">
    <text evidence="1">Heterodimer. Glycoprotein hormones are heterodimers composed of a common alpha chain described here and a unique beta chain which confers their biological specificity to the different hormones.</text>
</comment>
<comment type="subcellular location">
    <subcellularLocation>
        <location evidence="1">Secreted</location>
    </subcellularLocation>
</comment>
<comment type="similarity">
    <text evidence="3">Belongs to the glycoprotein hormones subunit alpha family.</text>
</comment>
<organism>
    <name type="scientific">Coturnix japonica</name>
    <name type="common">Japanese quail</name>
    <name type="synonym">Coturnix coturnix japonica</name>
    <dbReference type="NCBI Taxonomy" id="93934"/>
    <lineage>
        <taxon>Eukaryota</taxon>
        <taxon>Metazoa</taxon>
        <taxon>Chordata</taxon>
        <taxon>Craniata</taxon>
        <taxon>Vertebrata</taxon>
        <taxon>Euteleostomi</taxon>
        <taxon>Archelosauria</taxon>
        <taxon>Archosauria</taxon>
        <taxon>Dinosauria</taxon>
        <taxon>Saurischia</taxon>
        <taxon>Theropoda</taxon>
        <taxon>Coelurosauria</taxon>
        <taxon>Aves</taxon>
        <taxon>Neognathae</taxon>
        <taxon>Galloanserae</taxon>
        <taxon>Galliformes</taxon>
        <taxon>Phasianidae</taxon>
        <taxon>Perdicinae</taxon>
        <taxon>Coturnix</taxon>
    </lineage>
</organism>
<sequence length="120" mass="13591">MDCYRKYAAVTLTILSVFLHLLHTFPDGEFLMQGCPECKLGENRFFSKPGAPIYQCTGCCFSRAYPTPMRSKKTMLVPKNITSEATCCVAKAFTKITLKDNVKIENHTDCHCSTCYYHKS</sequence>
<gene>
    <name type="primary">CGA</name>
</gene>
<protein>
    <recommendedName>
        <fullName>Glycoprotein hormones alpha chain</fullName>
    </recommendedName>
    <alternativeName>
        <fullName>Anterior pituitary glycoprotein hormones common subunit alpha</fullName>
    </alternativeName>
    <alternativeName>
        <fullName>Follicle-stimulating hormone alpha chain</fullName>
        <shortName>FSH-alpha</shortName>
    </alternativeName>
    <alternativeName>
        <fullName>Follitropin alpha chain</fullName>
    </alternativeName>
    <alternativeName>
        <fullName>Luteinizing hormone alpha chain</fullName>
        <shortName>LSH-alpha</shortName>
    </alternativeName>
    <alternativeName>
        <fullName>Lutropin alpha chain</fullName>
    </alternativeName>
    <alternativeName>
        <fullName>Thyroid-stimulating hormone alpha chain</fullName>
        <shortName>TSH-alpha</shortName>
    </alternativeName>
    <alternativeName>
        <fullName>Thyrotropin alpha chain</fullName>
    </alternativeName>
</protein>
<keyword id="KW-1015">Disulfide bond</keyword>
<keyword id="KW-0325">Glycoprotein</keyword>
<keyword id="KW-0372">Hormone</keyword>
<keyword id="KW-1185">Reference proteome</keyword>
<keyword id="KW-0964">Secreted</keyword>
<keyword id="KW-0732">Signal</keyword>